<evidence type="ECO:0000255" key="1">
    <source>
        <dbReference type="HAMAP-Rule" id="MF_00235"/>
    </source>
</evidence>
<name>KAD_POLNS</name>
<feature type="chain" id="PRO_1000100591" description="Adenylate kinase">
    <location>
        <begin position="1"/>
        <end position="221"/>
    </location>
</feature>
<feature type="region of interest" description="NMP" evidence="1">
    <location>
        <begin position="30"/>
        <end position="59"/>
    </location>
</feature>
<feature type="region of interest" description="LID" evidence="1">
    <location>
        <begin position="122"/>
        <end position="159"/>
    </location>
</feature>
<feature type="binding site" evidence="1">
    <location>
        <begin position="10"/>
        <end position="15"/>
    </location>
    <ligand>
        <name>ATP</name>
        <dbReference type="ChEBI" id="CHEBI:30616"/>
    </ligand>
</feature>
<feature type="binding site" evidence="1">
    <location>
        <position position="31"/>
    </location>
    <ligand>
        <name>AMP</name>
        <dbReference type="ChEBI" id="CHEBI:456215"/>
    </ligand>
</feature>
<feature type="binding site" evidence="1">
    <location>
        <position position="36"/>
    </location>
    <ligand>
        <name>AMP</name>
        <dbReference type="ChEBI" id="CHEBI:456215"/>
    </ligand>
</feature>
<feature type="binding site" evidence="1">
    <location>
        <begin position="57"/>
        <end position="59"/>
    </location>
    <ligand>
        <name>AMP</name>
        <dbReference type="ChEBI" id="CHEBI:456215"/>
    </ligand>
</feature>
<feature type="binding site" evidence="1">
    <location>
        <begin position="85"/>
        <end position="88"/>
    </location>
    <ligand>
        <name>AMP</name>
        <dbReference type="ChEBI" id="CHEBI:456215"/>
    </ligand>
</feature>
<feature type="binding site" evidence="1">
    <location>
        <position position="92"/>
    </location>
    <ligand>
        <name>AMP</name>
        <dbReference type="ChEBI" id="CHEBI:456215"/>
    </ligand>
</feature>
<feature type="binding site" evidence="1">
    <location>
        <position position="123"/>
    </location>
    <ligand>
        <name>ATP</name>
        <dbReference type="ChEBI" id="CHEBI:30616"/>
    </ligand>
</feature>
<feature type="binding site" evidence="1">
    <location>
        <begin position="132"/>
        <end position="133"/>
    </location>
    <ligand>
        <name>ATP</name>
        <dbReference type="ChEBI" id="CHEBI:30616"/>
    </ligand>
</feature>
<feature type="binding site" evidence="1">
    <location>
        <position position="156"/>
    </location>
    <ligand>
        <name>AMP</name>
        <dbReference type="ChEBI" id="CHEBI:456215"/>
    </ligand>
</feature>
<feature type="binding site" evidence="1">
    <location>
        <position position="167"/>
    </location>
    <ligand>
        <name>AMP</name>
        <dbReference type="ChEBI" id="CHEBI:456215"/>
    </ligand>
</feature>
<feature type="binding site" evidence="1">
    <location>
        <position position="207"/>
    </location>
    <ligand>
        <name>ATP</name>
        <dbReference type="ChEBI" id="CHEBI:30616"/>
    </ligand>
</feature>
<dbReference type="EC" id="2.7.4.3" evidence="1"/>
<dbReference type="EMBL" id="CP001010">
    <property type="protein sequence ID" value="ACB43602.1"/>
    <property type="molecule type" value="Genomic_DNA"/>
</dbReference>
<dbReference type="SMR" id="B1XTC5"/>
<dbReference type="STRING" id="452638.Pnec_0309"/>
<dbReference type="KEGG" id="pne:Pnec_0309"/>
<dbReference type="eggNOG" id="COG0563">
    <property type="taxonomic scope" value="Bacteria"/>
</dbReference>
<dbReference type="HOGENOM" id="CLU_032354_1_2_4"/>
<dbReference type="OrthoDB" id="9805030at2"/>
<dbReference type="UniPathway" id="UPA00588">
    <property type="reaction ID" value="UER00649"/>
</dbReference>
<dbReference type="GO" id="GO:0005737">
    <property type="term" value="C:cytoplasm"/>
    <property type="evidence" value="ECO:0007669"/>
    <property type="project" value="UniProtKB-SubCell"/>
</dbReference>
<dbReference type="GO" id="GO:0004017">
    <property type="term" value="F:adenylate kinase activity"/>
    <property type="evidence" value="ECO:0007669"/>
    <property type="project" value="UniProtKB-UniRule"/>
</dbReference>
<dbReference type="GO" id="GO:0005524">
    <property type="term" value="F:ATP binding"/>
    <property type="evidence" value="ECO:0007669"/>
    <property type="project" value="UniProtKB-UniRule"/>
</dbReference>
<dbReference type="GO" id="GO:0044209">
    <property type="term" value="P:AMP salvage"/>
    <property type="evidence" value="ECO:0007669"/>
    <property type="project" value="UniProtKB-UniRule"/>
</dbReference>
<dbReference type="CDD" id="cd01428">
    <property type="entry name" value="ADK"/>
    <property type="match status" value="1"/>
</dbReference>
<dbReference type="FunFam" id="3.40.50.300:FF:000106">
    <property type="entry name" value="Adenylate kinase mitochondrial"/>
    <property type="match status" value="1"/>
</dbReference>
<dbReference type="Gene3D" id="3.40.50.300">
    <property type="entry name" value="P-loop containing nucleotide triphosphate hydrolases"/>
    <property type="match status" value="1"/>
</dbReference>
<dbReference type="HAMAP" id="MF_00235">
    <property type="entry name" value="Adenylate_kinase_Adk"/>
    <property type="match status" value="1"/>
</dbReference>
<dbReference type="InterPro" id="IPR006259">
    <property type="entry name" value="Adenyl_kin_sub"/>
</dbReference>
<dbReference type="InterPro" id="IPR000850">
    <property type="entry name" value="Adenylat/UMP-CMP_kin"/>
</dbReference>
<dbReference type="InterPro" id="IPR033690">
    <property type="entry name" value="Adenylat_kinase_CS"/>
</dbReference>
<dbReference type="InterPro" id="IPR007862">
    <property type="entry name" value="Adenylate_kinase_lid-dom"/>
</dbReference>
<dbReference type="InterPro" id="IPR027417">
    <property type="entry name" value="P-loop_NTPase"/>
</dbReference>
<dbReference type="NCBIfam" id="TIGR01351">
    <property type="entry name" value="adk"/>
    <property type="match status" value="1"/>
</dbReference>
<dbReference type="NCBIfam" id="NF001379">
    <property type="entry name" value="PRK00279.1-1"/>
    <property type="match status" value="1"/>
</dbReference>
<dbReference type="NCBIfam" id="NF001380">
    <property type="entry name" value="PRK00279.1-2"/>
    <property type="match status" value="1"/>
</dbReference>
<dbReference type="NCBIfam" id="NF001381">
    <property type="entry name" value="PRK00279.1-3"/>
    <property type="match status" value="1"/>
</dbReference>
<dbReference type="PANTHER" id="PTHR23359">
    <property type="entry name" value="NUCLEOTIDE KINASE"/>
    <property type="match status" value="1"/>
</dbReference>
<dbReference type="Pfam" id="PF00406">
    <property type="entry name" value="ADK"/>
    <property type="match status" value="1"/>
</dbReference>
<dbReference type="Pfam" id="PF05191">
    <property type="entry name" value="ADK_lid"/>
    <property type="match status" value="1"/>
</dbReference>
<dbReference type="PRINTS" id="PR00094">
    <property type="entry name" value="ADENYLTKNASE"/>
</dbReference>
<dbReference type="SUPFAM" id="SSF52540">
    <property type="entry name" value="P-loop containing nucleoside triphosphate hydrolases"/>
    <property type="match status" value="1"/>
</dbReference>
<dbReference type="PROSITE" id="PS00113">
    <property type="entry name" value="ADENYLATE_KINASE"/>
    <property type="match status" value="1"/>
</dbReference>
<reference key="1">
    <citation type="journal article" date="2013" name="Proc. Natl. Acad. Sci. U.S.A.">
        <title>Polynucleobacter necessarius, a model for genome reduction in both free-living and symbiotic bacteria.</title>
        <authorList>
            <person name="Boscaro V."/>
            <person name="Felletti M."/>
            <person name="Vannini C."/>
            <person name="Ackerman M.S."/>
            <person name="Chain P.S."/>
            <person name="Malfatti S."/>
            <person name="Vergez L.M."/>
            <person name="Shin M."/>
            <person name="Doak T.G."/>
            <person name="Lynch M."/>
            <person name="Petroni G."/>
        </authorList>
    </citation>
    <scope>NUCLEOTIDE SEQUENCE [LARGE SCALE GENOMIC DNA]</scope>
    <source>
        <strain>STIR1</strain>
    </source>
</reference>
<proteinExistence type="inferred from homology"/>
<accession>B1XTC5</accession>
<comment type="function">
    <text evidence="1">Catalyzes the reversible transfer of the terminal phosphate group between ATP and AMP. Plays an important role in cellular energy homeostasis and in adenine nucleotide metabolism.</text>
</comment>
<comment type="catalytic activity">
    <reaction evidence="1">
        <text>AMP + ATP = 2 ADP</text>
        <dbReference type="Rhea" id="RHEA:12973"/>
        <dbReference type="ChEBI" id="CHEBI:30616"/>
        <dbReference type="ChEBI" id="CHEBI:456215"/>
        <dbReference type="ChEBI" id="CHEBI:456216"/>
        <dbReference type="EC" id="2.7.4.3"/>
    </reaction>
</comment>
<comment type="pathway">
    <text evidence="1">Purine metabolism; AMP biosynthesis via salvage pathway; AMP from ADP: step 1/1.</text>
</comment>
<comment type="subunit">
    <text evidence="1">Monomer.</text>
</comment>
<comment type="subcellular location">
    <subcellularLocation>
        <location evidence="1">Cytoplasm</location>
    </subcellularLocation>
</comment>
<comment type="domain">
    <text evidence="1">Consists of three domains, a large central CORE domain and two small peripheral domains, NMPbind and LID, which undergo movements during catalysis. The LID domain closes over the site of phosphoryl transfer upon ATP binding. Assembling and dissambling the active center during each catalytic cycle provides an effective means to prevent ATP hydrolysis.</text>
</comment>
<comment type="similarity">
    <text evidence="1">Belongs to the adenylate kinase family.</text>
</comment>
<sequence length="221" mass="24211">MRLILLGAPGAGKGTQAQFICEKFAIPQISTGDMLRAAVKARTELGVAAKKIMDAGGLVSDDIIIGLVKDRLTQPDCSKGYLFDGFPRTIPQAQVMKDAGVPIDYVLEIDVPFDAIIDRMGGRRVHLASGRTYHIKFNPPKVEGKDDITGDPLIQRDDDKEETVRKRLQVYDDQTRPLVEYYSSWAAQANPADKVKAPTYRKVSGTSSVEDITASIFAALK</sequence>
<organism>
    <name type="scientific">Polynucleobacter necessarius subsp. necessarius (strain STIR1)</name>
    <dbReference type="NCBI Taxonomy" id="452638"/>
    <lineage>
        <taxon>Bacteria</taxon>
        <taxon>Pseudomonadati</taxon>
        <taxon>Pseudomonadota</taxon>
        <taxon>Betaproteobacteria</taxon>
        <taxon>Burkholderiales</taxon>
        <taxon>Burkholderiaceae</taxon>
        <taxon>Polynucleobacter</taxon>
    </lineage>
</organism>
<gene>
    <name evidence="1" type="primary">adk</name>
    <name type="ordered locus">Pnec_0309</name>
</gene>
<keyword id="KW-0067">ATP-binding</keyword>
<keyword id="KW-0963">Cytoplasm</keyword>
<keyword id="KW-0418">Kinase</keyword>
<keyword id="KW-0545">Nucleotide biosynthesis</keyword>
<keyword id="KW-0547">Nucleotide-binding</keyword>
<keyword id="KW-0808">Transferase</keyword>
<protein>
    <recommendedName>
        <fullName evidence="1">Adenylate kinase</fullName>
        <shortName evidence="1">AK</shortName>
        <ecNumber evidence="1">2.7.4.3</ecNumber>
    </recommendedName>
    <alternativeName>
        <fullName evidence="1">ATP-AMP transphosphorylase</fullName>
    </alternativeName>
    <alternativeName>
        <fullName evidence="1">ATP:AMP phosphotransferase</fullName>
    </alternativeName>
    <alternativeName>
        <fullName evidence="1">Adenylate monophosphate kinase</fullName>
    </alternativeName>
</protein>